<accession>Q5JSH3</accession>
<accession>B4DSE9</accession>
<accession>F8W913</accession>
<accession>Q0JS52</accession>
<accession>Q0JTF3</accession>
<accession>Q5JSH2</accession>
<accession>Q6ZSC1</accession>
<accession>Q7Z365</accession>
<accession>Q7Z3P6</accession>
<accession>Q8NAU8</accession>
<accession>Q8NHU5</accession>
<accession>Q9NUV4</accession>
<keyword id="KW-0007">Acetylation</keyword>
<keyword id="KW-0025">Alternative splicing</keyword>
<keyword id="KW-0175">Coiled coil</keyword>
<keyword id="KW-0963">Cytoplasm</keyword>
<keyword id="KW-0967">Endosome</keyword>
<keyword id="KW-0333">Golgi apparatus</keyword>
<keyword id="KW-0472">Membrane</keyword>
<keyword id="KW-0597">Phosphoprotein</keyword>
<keyword id="KW-1267">Proteomics identification</keyword>
<keyword id="KW-1185">Reference proteome</keyword>
<keyword id="KW-0677">Repeat</keyword>
<keyword id="KW-0853">WD repeat</keyword>
<name>WDR44_HUMAN</name>
<organism>
    <name type="scientific">Homo sapiens</name>
    <name type="common">Human</name>
    <dbReference type="NCBI Taxonomy" id="9606"/>
    <lineage>
        <taxon>Eukaryota</taxon>
        <taxon>Metazoa</taxon>
        <taxon>Chordata</taxon>
        <taxon>Craniata</taxon>
        <taxon>Vertebrata</taxon>
        <taxon>Euteleostomi</taxon>
        <taxon>Mammalia</taxon>
        <taxon>Eutheria</taxon>
        <taxon>Euarchontoglires</taxon>
        <taxon>Primates</taxon>
        <taxon>Haplorrhini</taxon>
        <taxon>Catarrhini</taxon>
        <taxon>Hominidae</taxon>
        <taxon>Homo</taxon>
    </lineage>
</organism>
<dbReference type="EMBL" id="AK001978">
    <property type="protein sequence ID" value="BAA92015.1"/>
    <property type="status" value="ALT_SEQ"/>
    <property type="molecule type" value="mRNA"/>
</dbReference>
<dbReference type="EMBL" id="AK092077">
    <property type="protein sequence ID" value="BAC03799.1"/>
    <property type="status" value="ALT_INIT"/>
    <property type="molecule type" value="mRNA"/>
</dbReference>
<dbReference type="EMBL" id="AK127556">
    <property type="protein sequence ID" value="BAC87033.1"/>
    <property type="molecule type" value="mRNA"/>
</dbReference>
<dbReference type="EMBL" id="AK299711">
    <property type="protein sequence ID" value="BAG61611.1"/>
    <property type="molecule type" value="mRNA"/>
</dbReference>
<dbReference type="EMBL" id="AM393332">
    <property type="protein sequence ID" value="CAL38210.1"/>
    <property type="molecule type" value="mRNA"/>
</dbReference>
<dbReference type="EMBL" id="AM393787">
    <property type="protein sequence ID" value="CAL38662.1"/>
    <property type="molecule type" value="mRNA"/>
</dbReference>
<dbReference type="EMBL" id="BX537578">
    <property type="protein sequence ID" value="CAD97788.1"/>
    <property type="molecule type" value="mRNA"/>
</dbReference>
<dbReference type="EMBL" id="BX538087">
    <property type="protein sequence ID" value="CAD98010.1"/>
    <property type="molecule type" value="mRNA"/>
</dbReference>
<dbReference type="EMBL" id="AL391474">
    <property type="status" value="NOT_ANNOTATED_CDS"/>
    <property type="molecule type" value="Genomic_DNA"/>
</dbReference>
<dbReference type="EMBL" id="AL391803">
    <property type="status" value="NOT_ANNOTATED_CDS"/>
    <property type="molecule type" value="Genomic_DNA"/>
</dbReference>
<dbReference type="EMBL" id="AL391830">
    <property type="status" value="NOT_ANNOTATED_CDS"/>
    <property type="molecule type" value="Genomic_DNA"/>
</dbReference>
<dbReference type="EMBL" id="BC028697">
    <property type="protein sequence ID" value="AAH28697.3"/>
    <property type="molecule type" value="mRNA"/>
</dbReference>
<dbReference type="CCDS" id="CCDS14572.1">
    <molecule id="Q5JSH3-1"/>
</dbReference>
<dbReference type="CCDS" id="CCDS55482.1">
    <molecule id="Q5JSH3-2"/>
</dbReference>
<dbReference type="CCDS" id="CCDS55483.1">
    <molecule id="Q5JSH3-4"/>
</dbReference>
<dbReference type="RefSeq" id="NP_001171894.1">
    <molecule id="Q5JSH3-2"/>
    <property type="nucleotide sequence ID" value="NM_001184965.2"/>
</dbReference>
<dbReference type="RefSeq" id="NP_001171895.1">
    <molecule id="Q5JSH3-4"/>
    <property type="nucleotide sequence ID" value="NM_001184966.1"/>
</dbReference>
<dbReference type="RefSeq" id="NP_061918.3">
    <molecule id="Q5JSH3-1"/>
    <property type="nucleotide sequence ID" value="NM_019045.4"/>
</dbReference>
<dbReference type="SMR" id="Q5JSH3"/>
<dbReference type="BioGRID" id="120014">
    <property type="interactions" value="117"/>
</dbReference>
<dbReference type="ELM" id="Q5JSH3"/>
<dbReference type="FunCoup" id="Q5JSH3">
    <property type="interactions" value="2060"/>
</dbReference>
<dbReference type="IntAct" id="Q5JSH3">
    <property type="interactions" value="47"/>
</dbReference>
<dbReference type="STRING" id="9606.ENSP00000254029"/>
<dbReference type="GlyGen" id="Q5JSH3">
    <property type="glycosylation" value="3 sites, 1 N-linked glycan (1 site), 1 O-linked glycan (1 site)"/>
</dbReference>
<dbReference type="iPTMnet" id="Q5JSH3"/>
<dbReference type="MetOSite" id="Q5JSH3"/>
<dbReference type="PhosphoSitePlus" id="Q5JSH3"/>
<dbReference type="SwissPalm" id="Q5JSH3"/>
<dbReference type="BioMuta" id="WDR44"/>
<dbReference type="DMDM" id="74762196"/>
<dbReference type="jPOST" id="Q5JSH3"/>
<dbReference type="MassIVE" id="Q5JSH3"/>
<dbReference type="PaxDb" id="9606-ENSP00000254029"/>
<dbReference type="PeptideAtlas" id="Q5JSH3"/>
<dbReference type="ProteomicsDB" id="30239"/>
<dbReference type="ProteomicsDB" id="63151">
    <molecule id="Q5JSH3-1"/>
</dbReference>
<dbReference type="ProteomicsDB" id="63152">
    <molecule id="Q5JSH3-2"/>
</dbReference>
<dbReference type="ProteomicsDB" id="63153">
    <molecule id="Q5JSH3-3"/>
</dbReference>
<dbReference type="Pumba" id="Q5JSH3"/>
<dbReference type="Antibodypedia" id="29682">
    <property type="antibodies" value="38 antibodies from 14 providers"/>
</dbReference>
<dbReference type="DNASU" id="54521"/>
<dbReference type="Ensembl" id="ENST00000254029.8">
    <molecule id="Q5JSH3-1"/>
    <property type="protein sequence ID" value="ENSP00000254029.3"/>
    <property type="gene ID" value="ENSG00000131725.14"/>
</dbReference>
<dbReference type="Ensembl" id="ENST00000371822.9">
    <molecule id="Q5JSH3-4"/>
    <property type="protein sequence ID" value="ENSP00000360887.5"/>
    <property type="gene ID" value="ENSG00000131725.14"/>
</dbReference>
<dbReference type="Ensembl" id="ENST00000371825.7">
    <molecule id="Q5JSH3-2"/>
    <property type="protein sequence ID" value="ENSP00000360890.3"/>
    <property type="gene ID" value="ENSG00000131725.14"/>
</dbReference>
<dbReference type="GeneID" id="54521"/>
<dbReference type="KEGG" id="hsa:54521"/>
<dbReference type="MANE-Select" id="ENST00000254029.8">
    <property type="protein sequence ID" value="ENSP00000254029.3"/>
    <property type="RefSeq nucleotide sequence ID" value="NM_019045.5"/>
    <property type="RefSeq protein sequence ID" value="NP_061918.3"/>
</dbReference>
<dbReference type="UCSC" id="uc004eqn.4">
    <molecule id="Q5JSH3-1"/>
    <property type="organism name" value="human"/>
</dbReference>
<dbReference type="AGR" id="HGNC:30512"/>
<dbReference type="CTD" id="54521"/>
<dbReference type="GeneCards" id="WDR44"/>
<dbReference type="HGNC" id="HGNC:30512">
    <property type="gene designation" value="WDR44"/>
</dbReference>
<dbReference type="HPA" id="ENSG00000131725">
    <property type="expression patterns" value="Low tissue specificity"/>
</dbReference>
<dbReference type="MIM" id="301070">
    <property type="type" value="gene"/>
</dbReference>
<dbReference type="neXtProt" id="NX_Q5JSH3"/>
<dbReference type="OpenTargets" id="ENSG00000131725"/>
<dbReference type="PharmGKB" id="PA128394668"/>
<dbReference type="VEuPathDB" id="HostDB:ENSG00000131725"/>
<dbReference type="eggNOG" id="KOG0283">
    <property type="taxonomic scope" value="Eukaryota"/>
</dbReference>
<dbReference type="GeneTree" id="ENSGT00940000157557"/>
<dbReference type="HOGENOM" id="CLU_009835_2_1_1"/>
<dbReference type="InParanoid" id="Q5JSH3"/>
<dbReference type="OMA" id="SQECVRP"/>
<dbReference type="OrthoDB" id="1932312at2759"/>
<dbReference type="PAN-GO" id="Q5JSH3">
    <property type="GO annotations" value="0 GO annotations based on evolutionary models"/>
</dbReference>
<dbReference type="PhylomeDB" id="Q5JSH3"/>
<dbReference type="TreeFam" id="TF329226"/>
<dbReference type="PathwayCommons" id="Q5JSH3"/>
<dbReference type="SignaLink" id="Q5JSH3"/>
<dbReference type="BioGRID-ORCS" id="54521">
    <property type="hits" value="33 hits in 791 CRISPR screens"/>
</dbReference>
<dbReference type="ChiTaRS" id="WDR44">
    <property type="organism name" value="human"/>
</dbReference>
<dbReference type="GeneWiki" id="WDR44"/>
<dbReference type="GenomeRNAi" id="54521"/>
<dbReference type="Pharos" id="Q5JSH3">
    <property type="development level" value="Tdark"/>
</dbReference>
<dbReference type="PRO" id="PR:Q5JSH3"/>
<dbReference type="Proteomes" id="UP000005640">
    <property type="component" value="Chromosome X"/>
</dbReference>
<dbReference type="RNAct" id="Q5JSH3">
    <property type="molecule type" value="protein"/>
</dbReference>
<dbReference type="Bgee" id="ENSG00000131725">
    <property type="expression patterns" value="Expressed in buccal mucosa cell and 196 other cell types or tissues"/>
</dbReference>
<dbReference type="ExpressionAtlas" id="Q5JSH3">
    <property type="expression patterns" value="baseline and differential"/>
</dbReference>
<dbReference type="GO" id="GO:0005829">
    <property type="term" value="C:cytosol"/>
    <property type="evidence" value="ECO:0007669"/>
    <property type="project" value="UniProtKB-SubCell"/>
</dbReference>
<dbReference type="GO" id="GO:0010008">
    <property type="term" value="C:endosome membrane"/>
    <property type="evidence" value="ECO:0000314"/>
    <property type="project" value="UniProt"/>
</dbReference>
<dbReference type="GO" id="GO:0005794">
    <property type="term" value="C:Golgi apparatus"/>
    <property type="evidence" value="ECO:0000314"/>
    <property type="project" value="HPA"/>
</dbReference>
<dbReference type="GO" id="GO:0048471">
    <property type="term" value="C:perinuclear region of cytoplasm"/>
    <property type="evidence" value="ECO:0007669"/>
    <property type="project" value="UniProtKB-SubCell"/>
</dbReference>
<dbReference type="GO" id="GO:0140313">
    <property type="term" value="F:molecular sequestering activity"/>
    <property type="evidence" value="ECO:0000315"/>
    <property type="project" value="UniProtKB"/>
</dbReference>
<dbReference type="GO" id="GO:0031267">
    <property type="term" value="F:small GTPase binding"/>
    <property type="evidence" value="ECO:0000314"/>
    <property type="project" value="UniProtKB"/>
</dbReference>
<dbReference type="GO" id="GO:0061824">
    <property type="term" value="P:cytosolic ciliogenesis"/>
    <property type="evidence" value="ECO:0000315"/>
    <property type="project" value="UniProtKB"/>
</dbReference>
<dbReference type="GO" id="GO:1902018">
    <property type="term" value="P:negative regulation of cilium assembly"/>
    <property type="evidence" value="ECO:0000315"/>
    <property type="project" value="UniProtKB"/>
</dbReference>
<dbReference type="GO" id="GO:0060627">
    <property type="term" value="P:regulation of vesicle-mediated transport"/>
    <property type="evidence" value="ECO:0000315"/>
    <property type="project" value="UniProtKB"/>
</dbReference>
<dbReference type="CDD" id="cd00200">
    <property type="entry name" value="WD40"/>
    <property type="match status" value="1"/>
</dbReference>
<dbReference type="Gene3D" id="2.130.10.10">
    <property type="entry name" value="YVTN repeat-like/Quinoprotein amine dehydrogenase"/>
    <property type="match status" value="1"/>
</dbReference>
<dbReference type="InterPro" id="IPR020472">
    <property type="entry name" value="G-protein_beta_WD-40_rep"/>
</dbReference>
<dbReference type="InterPro" id="IPR015943">
    <property type="entry name" value="WD40/YVTN_repeat-like_dom_sf"/>
</dbReference>
<dbReference type="InterPro" id="IPR036322">
    <property type="entry name" value="WD40_repeat_dom_sf"/>
</dbReference>
<dbReference type="InterPro" id="IPR001680">
    <property type="entry name" value="WD40_rpt"/>
</dbReference>
<dbReference type="InterPro" id="IPR040324">
    <property type="entry name" value="WDR44/Dgr2"/>
</dbReference>
<dbReference type="PANTHER" id="PTHR14221">
    <property type="entry name" value="WD REPEAT DOMAIN 44"/>
    <property type="match status" value="1"/>
</dbReference>
<dbReference type="PANTHER" id="PTHR14221:SF0">
    <property type="entry name" value="WD REPEAT-CONTAINING PROTEIN 44"/>
    <property type="match status" value="1"/>
</dbReference>
<dbReference type="Pfam" id="PF00400">
    <property type="entry name" value="WD40"/>
    <property type="match status" value="4"/>
</dbReference>
<dbReference type="PRINTS" id="PR00320">
    <property type="entry name" value="GPROTEINBRPT"/>
</dbReference>
<dbReference type="SMART" id="SM00320">
    <property type="entry name" value="WD40"/>
    <property type="match status" value="6"/>
</dbReference>
<dbReference type="SUPFAM" id="SSF50978">
    <property type="entry name" value="WD40 repeat-like"/>
    <property type="match status" value="1"/>
</dbReference>
<dbReference type="PROSITE" id="PS50082">
    <property type="entry name" value="WD_REPEATS_2"/>
    <property type="match status" value="4"/>
</dbReference>
<dbReference type="PROSITE" id="PS50294">
    <property type="entry name" value="WD_REPEATS_REGION"/>
    <property type="match status" value="1"/>
</dbReference>
<evidence type="ECO:0000250" key="1">
    <source>
        <dbReference type="UniProtKB" id="Q6NVE8"/>
    </source>
</evidence>
<evidence type="ECO:0000250" key="2">
    <source>
        <dbReference type="UniProtKB" id="Q9R037"/>
    </source>
</evidence>
<evidence type="ECO:0000250" key="3">
    <source>
        <dbReference type="UniProtKB" id="Q9XSC3"/>
    </source>
</evidence>
<evidence type="ECO:0000255" key="4"/>
<evidence type="ECO:0000256" key="5">
    <source>
        <dbReference type="SAM" id="MobiDB-lite"/>
    </source>
</evidence>
<evidence type="ECO:0000269" key="6">
    <source>
    </source>
</evidence>
<evidence type="ECO:0000269" key="7">
    <source>
    </source>
</evidence>
<evidence type="ECO:0000269" key="8">
    <source>
    </source>
</evidence>
<evidence type="ECO:0000269" key="9">
    <source>
    </source>
</evidence>
<evidence type="ECO:0000303" key="10">
    <source>
    </source>
</evidence>
<evidence type="ECO:0000303" key="11">
    <source>
    </source>
</evidence>
<evidence type="ECO:0000305" key="12"/>
<evidence type="ECO:0000312" key="13">
    <source>
        <dbReference type="HGNC" id="HGNC:30512"/>
    </source>
</evidence>
<evidence type="ECO:0007744" key="14">
    <source>
    </source>
</evidence>
<evidence type="ECO:0007744" key="15">
    <source>
    </source>
</evidence>
<evidence type="ECO:0007744" key="16">
    <source>
    </source>
</evidence>
<evidence type="ECO:0007744" key="17">
    <source>
    </source>
</evidence>
<evidence type="ECO:0007744" key="18">
    <source>
    </source>
</evidence>
<evidence type="ECO:0007744" key="19">
    <source>
    </source>
</evidence>
<evidence type="ECO:0007744" key="20">
    <source>
    </source>
</evidence>
<evidence type="ECO:0007744" key="21">
    <source>
    </source>
</evidence>
<evidence type="ECO:0007744" key="22">
    <source>
    </source>
</evidence>
<proteinExistence type="evidence at protein level"/>
<sequence length="913" mass="101366">MASESDTEEFYDAPEDVHLGGGYPVGSPGKVGLSTFKETENTAYKVGNESPVQELKQDVSKKIIESIIEESQKVLQLEDDSLDSKGKELSDQATASPIVARTDLSNIPGLLAIDQVLPEESQKAESQNTFEETELELKKCFPSDETCEKPVDETTKLTQTSSTEQLNVLETETEVLNKEAVEVKGGGDVLEPVSSDSLSTKDFAAVEEVAPAKPPRHLTPEPDIVASTKKPVPARPPPPTNFPPPRPPPPSRPAPPPRKRKSELEFETLKTPDIDVPKENITSDSLLTASMASESTVKDSQPSLDLASATSGDKIVTAQENGKAPDGQTVAGEVMGPQRPRSNSGRELTDEEILASVMIKNLDTGEEIPLSLAEEKLPTGINPLTLHIMRRTKEYVSNDAAQSDDEEKLQSQPTDTDGGRLKQKTTQLKKFLGKSVKRAKHLAEEYGERAINKVKSVRDEVFHTDQDDPSSSDDEGMPYTRPVKFKAAHGFKGPYDFDQIKVVQDLSGEHMGAVWTMKFSHCGRLLASAGQDNVVRIWALKNAFDYFNNMRMKYNTEGRVSPSPSQESLSSSKSDTDTGVCSGTDEDPDDKNAPFRQRPFCKYKGHTADLLDLSWSKNYFLLSSSMDKTVRLWHISRRECLCCFQHIDFVTAIAFHPRDDRYFLSGSLDGKLRLWNIPDKKVALWNEVDGQTKLITAANFCQNGKYAVIGTYDGRCIFYDTEHLKYHTQIHVRSTRGRNKVGRKITGIEPLPGENKILVTSNDSRIRLYDLRDLSLSMKYKGYVNSSSQIKASFSHDFTYLVSGSEDKYVYIWSTYHDLSKFTSVRRDRNDFWEGIKAHNAVVTSAIFAPNPSLMLSLDVQSEKSEGNEKSEDAEVLDATPSGIMKTDNTEVLLSADFTGAIKVFVNKRKNVS</sequence>
<reference key="1">
    <citation type="journal article" date="2004" name="Nat. Genet.">
        <title>Complete sequencing and characterization of 21,243 full-length human cDNAs.</title>
        <authorList>
            <person name="Ota T."/>
            <person name="Suzuki Y."/>
            <person name="Nishikawa T."/>
            <person name="Otsuki T."/>
            <person name="Sugiyama T."/>
            <person name="Irie R."/>
            <person name="Wakamatsu A."/>
            <person name="Hayashi K."/>
            <person name="Sato H."/>
            <person name="Nagai K."/>
            <person name="Kimura K."/>
            <person name="Makita H."/>
            <person name="Sekine M."/>
            <person name="Obayashi M."/>
            <person name="Nishi T."/>
            <person name="Shibahara T."/>
            <person name="Tanaka T."/>
            <person name="Ishii S."/>
            <person name="Yamamoto J."/>
            <person name="Saito K."/>
            <person name="Kawai Y."/>
            <person name="Isono Y."/>
            <person name="Nakamura Y."/>
            <person name="Nagahari K."/>
            <person name="Murakami K."/>
            <person name="Yasuda T."/>
            <person name="Iwayanagi T."/>
            <person name="Wagatsuma M."/>
            <person name="Shiratori A."/>
            <person name="Sudo H."/>
            <person name="Hosoiri T."/>
            <person name="Kaku Y."/>
            <person name="Kodaira H."/>
            <person name="Kondo H."/>
            <person name="Sugawara M."/>
            <person name="Takahashi M."/>
            <person name="Kanda K."/>
            <person name="Yokoi T."/>
            <person name="Furuya T."/>
            <person name="Kikkawa E."/>
            <person name="Omura Y."/>
            <person name="Abe K."/>
            <person name="Kamihara K."/>
            <person name="Katsuta N."/>
            <person name="Sato K."/>
            <person name="Tanikawa M."/>
            <person name="Yamazaki M."/>
            <person name="Ninomiya K."/>
            <person name="Ishibashi T."/>
            <person name="Yamashita H."/>
            <person name="Murakawa K."/>
            <person name="Fujimori K."/>
            <person name="Tanai H."/>
            <person name="Kimata M."/>
            <person name="Watanabe M."/>
            <person name="Hiraoka S."/>
            <person name="Chiba Y."/>
            <person name="Ishida S."/>
            <person name="Ono Y."/>
            <person name="Takiguchi S."/>
            <person name="Watanabe S."/>
            <person name="Yosida M."/>
            <person name="Hotuta T."/>
            <person name="Kusano J."/>
            <person name="Kanehori K."/>
            <person name="Takahashi-Fujii A."/>
            <person name="Hara H."/>
            <person name="Tanase T.-O."/>
            <person name="Nomura Y."/>
            <person name="Togiya S."/>
            <person name="Komai F."/>
            <person name="Hara R."/>
            <person name="Takeuchi K."/>
            <person name="Arita M."/>
            <person name="Imose N."/>
            <person name="Musashino K."/>
            <person name="Yuuki H."/>
            <person name="Oshima A."/>
            <person name="Sasaki N."/>
            <person name="Aotsuka S."/>
            <person name="Yoshikawa Y."/>
            <person name="Matsunawa H."/>
            <person name="Ichihara T."/>
            <person name="Shiohata N."/>
            <person name="Sano S."/>
            <person name="Moriya S."/>
            <person name="Momiyama H."/>
            <person name="Satoh N."/>
            <person name="Takami S."/>
            <person name="Terashima Y."/>
            <person name="Suzuki O."/>
            <person name="Nakagawa S."/>
            <person name="Senoh A."/>
            <person name="Mizoguchi H."/>
            <person name="Goto Y."/>
            <person name="Shimizu F."/>
            <person name="Wakebe H."/>
            <person name="Hishigaki H."/>
            <person name="Watanabe T."/>
            <person name="Sugiyama A."/>
            <person name="Takemoto M."/>
            <person name="Kawakami B."/>
            <person name="Yamazaki M."/>
            <person name="Watanabe K."/>
            <person name="Kumagai A."/>
            <person name="Itakura S."/>
            <person name="Fukuzumi Y."/>
            <person name="Fujimori Y."/>
            <person name="Komiyama M."/>
            <person name="Tashiro H."/>
            <person name="Tanigami A."/>
            <person name="Fujiwara T."/>
            <person name="Ono T."/>
            <person name="Yamada K."/>
            <person name="Fujii Y."/>
            <person name="Ozaki K."/>
            <person name="Hirao M."/>
            <person name="Ohmori Y."/>
            <person name="Kawabata A."/>
            <person name="Hikiji T."/>
            <person name="Kobatake N."/>
            <person name="Inagaki H."/>
            <person name="Ikema Y."/>
            <person name="Okamoto S."/>
            <person name="Okitani R."/>
            <person name="Kawakami T."/>
            <person name="Noguchi S."/>
            <person name="Itoh T."/>
            <person name="Shigeta K."/>
            <person name="Senba T."/>
            <person name="Matsumura K."/>
            <person name="Nakajima Y."/>
            <person name="Mizuno T."/>
            <person name="Morinaga M."/>
            <person name="Sasaki M."/>
            <person name="Togashi T."/>
            <person name="Oyama M."/>
            <person name="Hata H."/>
            <person name="Watanabe M."/>
            <person name="Komatsu T."/>
            <person name="Mizushima-Sugano J."/>
            <person name="Satoh T."/>
            <person name="Shirai Y."/>
            <person name="Takahashi Y."/>
            <person name="Nakagawa K."/>
            <person name="Okumura K."/>
            <person name="Nagase T."/>
            <person name="Nomura N."/>
            <person name="Kikuchi H."/>
            <person name="Masuho Y."/>
            <person name="Yamashita R."/>
            <person name="Nakai K."/>
            <person name="Yada T."/>
            <person name="Nakamura Y."/>
            <person name="Ohara O."/>
            <person name="Isogai T."/>
            <person name="Sugano S."/>
        </authorList>
    </citation>
    <scope>NUCLEOTIDE SEQUENCE [LARGE SCALE MRNA] (ISOFORMS 3 AND 4)</scope>
    <scope>NUCLEOTIDE SEQUENCE [LARGE SCALE MRNA] OF 190-913 (ISOFORM 1)</scope>
    <source>
        <tissue>Brain</tissue>
        <tissue>Teratocarcinoma</tissue>
        <tissue>Tongue</tissue>
    </source>
</reference>
<reference key="2">
    <citation type="journal article" date="2007" name="BMC Genomics">
        <title>The full-ORF clone resource of the German cDNA consortium.</title>
        <authorList>
            <person name="Bechtel S."/>
            <person name="Rosenfelder H."/>
            <person name="Duda A."/>
            <person name="Schmidt C.P."/>
            <person name="Ernst U."/>
            <person name="Wellenreuther R."/>
            <person name="Mehrle A."/>
            <person name="Schuster C."/>
            <person name="Bahr A."/>
            <person name="Bloecker H."/>
            <person name="Heubner D."/>
            <person name="Hoerlein A."/>
            <person name="Michel G."/>
            <person name="Wedler H."/>
            <person name="Koehrer K."/>
            <person name="Ottenwaelder B."/>
            <person name="Poustka A."/>
            <person name="Wiemann S."/>
            <person name="Schupp I."/>
        </authorList>
    </citation>
    <scope>NUCLEOTIDE SEQUENCE [LARGE SCALE MRNA] (ISOFORMS 1 AND 2)</scope>
    <scope>VARIANT THR-289</scope>
    <source>
        <tissue>Colon endothelium</tissue>
        <tissue>Endometrial tumor</tissue>
    </source>
</reference>
<reference key="3">
    <citation type="journal article" date="2005" name="Nature">
        <title>The DNA sequence of the human X chromosome.</title>
        <authorList>
            <person name="Ross M.T."/>
            <person name="Grafham D.V."/>
            <person name="Coffey A.J."/>
            <person name="Scherer S."/>
            <person name="McLay K."/>
            <person name="Muzny D."/>
            <person name="Platzer M."/>
            <person name="Howell G.R."/>
            <person name="Burrows C."/>
            <person name="Bird C.P."/>
            <person name="Frankish A."/>
            <person name="Lovell F.L."/>
            <person name="Howe K.L."/>
            <person name="Ashurst J.L."/>
            <person name="Fulton R.S."/>
            <person name="Sudbrak R."/>
            <person name="Wen G."/>
            <person name="Jones M.C."/>
            <person name="Hurles M.E."/>
            <person name="Andrews T.D."/>
            <person name="Scott C.E."/>
            <person name="Searle S."/>
            <person name="Ramser J."/>
            <person name="Whittaker A."/>
            <person name="Deadman R."/>
            <person name="Carter N.P."/>
            <person name="Hunt S.E."/>
            <person name="Chen R."/>
            <person name="Cree A."/>
            <person name="Gunaratne P."/>
            <person name="Havlak P."/>
            <person name="Hodgson A."/>
            <person name="Metzker M.L."/>
            <person name="Richards S."/>
            <person name="Scott G."/>
            <person name="Steffen D."/>
            <person name="Sodergren E."/>
            <person name="Wheeler D.A."/>
            <person name="Worley K.C."/>
            <person name="Ainscough R."/>
            <person name="Ambrose K.D."/>
            <person name="Ansari-Lari M.A."/>
            <person name="Aradhya S."/>
            <person name="Ashwell R.I."/>
            <person name="Babbage A.K."/>
            <person name="Bagguley C.L."/>
            <person name="Ballabio A."/>
            <person name="Banerjee R."/>
            <person name="Barker G.E."/>
            <person name="Barlow K.F."/>
            <person name="Barrett I.P."/>
            <person name="Bates K.N."/>
            <person name="Beare D.M."/>
            <person name="Beasley H."/>
            <person name="Beasley O."/>
            <person name="Beck A."/>
            <person name="Bethel G."/>
            <person name="Blechschmidt K."/>
            <person name="Brady N."/>
            <person name="Bray-Allen S."/>
            <person name="Bridgeman A.M."/>
            <person name="Brown A.J."/>
            <person name="Brown M.J."/>
            <person name="Bonnin D."/>
            <person name="Bruford E.A."/>
            <person name="Buhay C."/>
            <person name="Burch P."/>
            <person name="Burford D."/>
            <person name="Burgess J."/>
            <person name="Burrill W."/>
            <person name="Burton J."/>
            <person name="Bye J.M."/>
            <person name="Carder C."/>
            <person name="Carrel L."/>
            <person name="Chako J."/>
            <person name="Chapman J.C."/>
            <person name="Chavez D."/>
            <person name="Chen E."/>
            <person name="Chen G."/>
            <person name="Chen Y."/>
            <person name="Chen Z."/>
            <person name="Chinault C."/>
            <person name="Ciccodicola A."/>
            <person name="Clark S.Y."/>
            <person name="Clarke G."/>
            <person name="Clee C.M."/>
            <person name="Clegg S."/>
            <person name="Clerc-Blankenburg K."/>
            <person name="Clifford K."/>
            <person name="Cobley V."/>
            <person name="Cole C.G."/>
            <person name="Conquer J.S."/>
            <person name="Corby N."/>
            <person name="Connor R.E."/>
            <person name="David R."/>
            <person name="Davies J."/>
            <person name="Davis C."/>
            <person name="Davis J."/>
            <person name="Delgado O."/>
            <person name="Deshazo D."/>
            <person name="Dhami P."/>
            <person name="Ding Y."/>
            <person name="Dinh H."/>
            <person name="Dodsworth S."/>
            <person name="Draper H."/>
            <person name="Dugan-Rocha S."/>
            <person name="Dunham A."/>
            <person name="Dunn M."/>
            <person name="Durbin K.J."/>
            <person name="Dutta I."/>
            <person name="Eades T."/>
            <person name="Ellwood M."/>
            <person name="Emery-Cohen A."/>
            <person name="Errington H."/>
            <person name="Evans K.L."/>
            <person name="Faulkner L."/>
            <person name="Francis F."/>
            <person name="Frankland J."/>
            <person name="Fraser A.E."/>
            <person name="Galgoczy P."/>
            <person name="Gilbert J."/>
            <person name="Gill R."/>
            <person name="Gloeckner G."/>
            <person name="Gregory S.G."/>
            <person name="Gribble S."/>
            <person name="Griffiths C."/>
            <person name="Grocock R."/>
            <person name="Gu Y."/>
            <person name="Gwilliam R."/>
            <person name="Hamilton C."/>
            <person name="Hart E.A."/>
            <person name="Hawes A."/>
            <person name="Heath P.D."/>
            <person name="Heitmann K."/>
            <person name="Hennig S."/>
            <person name="Hernandez J."/>
            <person name="Hinzmann B."/>
            <person name="Ho S."/>
            <person name="Hoffs M."/>
            <person name="Howden P.J."/>
            <person name="Huckle E.J."/>
            <person name="Hume J."/>
            <person name="Hunt P.J."/>
            <person name="Hunt A.R."/>
            <person name="Isherwood J."/>
            <person name="Jacob L."/>
            <person name="Johnson D."/>
            <person name="Jones S."/>
            <person name="de Jong P.J."/>
            <person name="Joseph S.S."/>
            <person name="Keenan S."/>
            <person name="Kelly S."/>
            <person name="Kershaw J.K."/>
            <person name="Khan Z."/>
            <person name="Kioschis P."/>
            <person name="Klages S."/>
            <person name="Knights A.J."/>
            <person name="Kosiura A."/>
            <person name="Kovar-Smith C."/>
            <person name="Laird G.K."/>
            <person name="Langford C."/>
            <person name="Lawlor S."/>
            <person name="Leversha M."/>
            <person name="Lewis L."/>
            <person name="Liu W."/>
            <person name="Lloyd C."/>
            <person name="Lloyd D.M."/>
            <person name="Loulseged H."/>
            <person name="Loveland J.E."/>
            <person name="Lovell J.D."/>
            <person name="Lozado R."/>
            <person name="Lu J."/>
            <person name="Lyne R."/>
            <person name="Ma J."/>
            <person name="Maheshwari M."/>
            <person name="Matthews L.H."/>
            <person name="McDowall J."/>
            <person name="McLaren S."/>
            <person name="McMurray A."/>
            <person name="Meidl P."/>
            <person name="Meitinger T."/>
            <person name="Milne S."/>
            <person name="Miner G."/>
            <person name="Mistry S.L."/>
            <person name="Morgan M."/>
            <person name="Morris S."/>
            <person name="Mueller I."/>
            <person name="Mullikin J.C."/>
            <person name="Nguyen N."/>
            <person name="Nordsiek G."/>
            <person name="Nyakatura G."/>
            <person name="O'dell C.N."/>
            <person name="Okwuonu G."/>
            <person name="Palmer S."/>
            <person name="Pandian R."/>
            <person name="Parker D."/>
            <person name="Parrish J."/>
            <person name="Pasternak S."/>
            <person name="Patel D."/>
            <person name="Pearce A.V."/>
            <person name="Pearson D.M."/>
            <person name="Pelan S.E."/>
            <person name="Perez L."/>
            <person name="Porter K.M."/>
            <person name="Ramsey Y."/>
            <person name="Reichwald K."/>
            <person name="Rhodes S."/>
            <person name="Ridler K.A."/>
            <person name="Schlessinger D."/>
            <person name="Schueler M.G."/>
            <person name="Sehra H.K."/>
            <person name="Shaw-Smith C."/>
            <person name="Shen H."/>
            <person name="Sheridan E.M."/>
            <person name="Shownkeen R."/>
            <person name="Skuce C.D."/>
            <person name="Smith M.L."/>
            <person name="Sotheran E.C."/>
            <person name="Steingruber H.E."/>
            <person name="Steward C.A."/>
            <person name="Storey R."/>
            <person name="Swann R.M."/>
            <person name="Swarbreck D."/>
            <person name="Tabor P.E."/>
            <person name="Taudien S."/>
            <person name="Taylor T."/>
            <person name="Teague B."/>
            <person name="Thomas K."/>
            <person name="Thorpe A."/>
            <person name="Timms K."/>
            <person name="Tracey A."/>
            <person name="Trevanion S."/>
            <person name="Tromans A.C."/>
            <person name="d'Urso M."/>
            <person name="Verduzco D."/>
            <person name="Villasana D."/>
            <person name="Waldron L."/>
            <person name="Wall M."/>
            <person name="Wang Q."/>
            <person name="Warren J."/>
            <person name="Warry G.L."/>
            <person name="Wei X."/>
            <person name="West A."/>
            <person name="Whitehead S.L."/>
            <person name="Whiteley M.N."/>
            <person name="Wilkinson J.E."/>
            <person name="Willey D.L."/>
            <person name="Williams G."/>
            <person name="Williams L."/>
            <person name="Williamson A."/>
            <person name="Williamson H."/>
            <person name="Wilming L."/>
            <person name="Woodmansey R.L."/>
            <person name="Wray P.W."/>
            <person name="Yen J."/>
            <person name="Zhang J."/>
            <person name="Zhou J."/>
            <person name="Zoghbi H."/>
            <person name="Zorilla S."/>
            <person name="Buck D."/>
            <person name="Reinhardt R."/>
            <person name="Poustka A."/>
            <person name="Rosenthal A."/>
            <person name="Lehrach H."/>
            <person name="Meindl A."/>
            <person name="Minx P.J."/>
            <person name="Hillier L.W."/>
            <person name="Willard H.F."/>
            <person name="Wilson R.K."/>
            <person name="Waterston R.H."/>
            <person name="Rice C.M."/>
            <person name="Vaudin M."/>
            <person name="Coulson A."/>
            <person name="Nelson D.L."/>
            <person name="Weinstock G."/>
            <person name="Sulston J.E."/>
            <person name="Durbin R.M."/>
            <person name="Hubbard T."/>
            <person name="Gibbs R.A."/>
            <person name="Beck S."/>
            <person name="Rogers J."/>
            <person name="Bentley D.R."/>
        </authorList>
    </citation>
    <scope>NUCLEOTIDE SEQUENCE [LARGE SCALE GENOMIC DNA]</scope>
</reference>
<reference key="4">
    <citation type="journal article" date="2004" name="Genome Res.">
        <title>The status, quality, and expansion of the NIH full-length cDNA project: the Mammalian Gene Collection (MGC).</title>
        <authorList>
            <consortium name="The MGC Project Team"/>
        </authorList>
    </citation>
    <scope>NUCLEOTIDE SEQUENCE [LARGE SCALE MRNA] (ISOFORM 1)</scope>
    <scope>VARIANT ALA-296</scope>
    <source>
        <tissue>Testis</tissue>
    </source>
</reference>
<reference key="5">
    <citation type="journal article" date="2006" name="Cell">
        <title>Global, in vivo, and site-specific phosphorylation dynamics in signaling networks.</title>
        <authorList>
            <person name="Olsen J.V."/>
            <person name="Blagoev B."/>
            <person name="Gnad F."/>
            <person name="Macek B."/>
            <person name="Kumar C."/>
            <person name="Mortensen P."/>
            <person name="Mann M."/>
        </authorList>
    </citation>
    <scope>PHOSPHORYLATION [LARGE SCALE ANALYSIS] AT TYR-11; SER-27; SER-262 AND SER-403</scope>
    <scope>IDENTIFICATION BY MASS SPECTROMETRY [LARGE SCALE ANALYSIS]</scope>
    <source>
        <tissue>Cervix carcinoma</tissue>
    </source>
</reference>
<reference key="6">
    <citation type="journal article" date="2006" name="Nat. Biotechnol.">
        <title>A probability-based approach for high-throughput protein phosphorylation analysis and site localization.</title>
        <authorList>
            <person name="Beausoleil S.A."/>
            <person name="Villen J."/>
            <person name="Gerber S.A."/>
            <person name="Rush J."/>
            <person name="Gygi S.P."/>
        </authorList>
    </citation>
    <scope>PHOSPHORYLATION [LARGE SCALE ANALYSIS] AT SER-50 AND SER-96</scope>
    <scope>IDENTIFICATION BY MASS SPECTROMETRY [LARGE SCALE ANALYSIS]</scope>
    <source>
        <tissue>Cervix carcinoma</tissue>
    </source>
</reference>
<reference key="7">
    <citation type="journal article" date="2008" name="J. Proteome Res.">
        <title>Combining protein-based IMAC, peptide-based IMAC, and MudPIT for efficient phosphoproteomic analysis.</title>
        <authorList>
            <person name="Cantin G.T."/>
            <person name="Yi W."/>
            <person name="Lu B."/>
            <person name="Park S.K."/>
            <person name="Xu T."/>
            <person name="Lee J.-D."/>
            <person name="Yates J.R. III"/>
        </authorList>
    </citation>
    <scope>IDENTIFICATION BY MASS SPECTROMETRY [LARGE SCALE ANALYSIS]</scope>
    <source>
        <tissue>Cervix carcinoma</tissue>
    </source>
</reference>
<reference key="8">
    <citation type="journal article" date="2008" name="Proc. Natl. Acad. Sci. U.S.A.">
        <title>A quantitative atlas of mitotic phosphorylation.</title>
        <authorList>
            <person name="Dephoure N."/>
            <person name="Zhou C."/>
            <person name="Villen J."/>
            <person name="Beausoleil S.A."/>
            <person name="Bakalarski C.E."/>
            <person name="Elledge S.J."/>
            <person name="Gygi S.P."/>
        </authorList>
    </citation>
    <scope>PHOSPHORYLATION [LARGE SCALE ANALYSIS] AT SER-96; THR-219; SER-262; SER-403; SER-470; SER-471 AND SER-472</scope>
    <scope>IDENTIFICATION BY MASS SPECTROMETRY [LARGE SCALE ANALYSIS]</scope>
    <source>
        <tissue>Cervix carcinoma</tissue>
    </source>
</reference>
<reference key="9">
    <citation type="journal article" date="2009" name="Anal. Chem.">
        <title>Lys-N and trypsin cover complementary parts of the phosphoproteome in a refined SCX-based approach.</title>
        <authorList>
            <person name="Gauci S."/>
            <person name="Helbig A.O."/>
            <person name="Slijper M."/>
            <person name="Krijgsveld J."/>
            <person name="Heck A.J."/>
            <person name="Mohammed S."/>
        </authorList>
    </citation>
    <scope>ACETYLATION [LARGE SCALE ANALYSIS] AT ALA-2</scope>
    <scope>CLEAVAGE OF INITIATOR METHIONINE [LARGE SCALE ANALYSIS]</scope>
    <scope>IDENTIFICATION BY MASS SPECTROMETRY [LARGE SCALE ANALYSIS]</scope>
</reference>
<reference key="10">
    <citation type="journal article" date="2009" name="Sci. Signal.">
        <title>Quantitative phosphoproteomic analysis of T cell receptor signaling reveals system-wide modulation of protein-protein interactions.</title>
        <authorList>
            <person name="Mayya V."/>
            <person name="Lundgren D.H."/>
            <person name="Hwang S.-I."/>
            <person name="Rezaul K."/>
            <person name="Wu L."/>
            <person name="Eng J.K."/>
            <person name="Rodionov V."/>
            <person name="Han D.K."/>
        </authorList>
    </citation>
    <scope>PHOSPHORYLATION [LARGE SCALE ANALYSIS] AT SER-96 AND SER-403</scope>
    <scope>IDENTIFICATION BY MASS SPECTROMETRY [LARGE SCALE ANALYSIS]</scope>
    <source>
        <tissue>Leukemic T-cell</tissue>
    </source>
</reference>
<reference key="11">
    <citation type="journal article" date="2010" name="Sci. Signal.">
        <title>Quantitative phosphoproteomics reveals widespread full phosphorylation site occupancy during mitosis.</title>
        <authorList>
            <person name="Olsen J.V."/>
            <person name="Vermeulen M."/>
            <person name="Santamaria A."/>
            <person name="Kumar C."/>
            <person name="Miller M.L."/>
            <person name="Jensen L.J."/>
            <person name="Gnad F."/>
            <person name="Cox J."/>
            <person name="Jensen T.S."/>
            <person name="Nigg E.A."/>
            <person name="Brunak S."/>
            <person name="Mann M."/>
        </authorList>
    </citation>
    <scope>ACETYLATION [LARGE SCALE ANALYSIS] AT ALA-2</scope>
    <scope>PHOSPHORYLATION [LARGE SCALE ANALYSIS] AT SER-3; SER-27; SER-50; SER-96; THR-219; SER-262; SER-342 AND SER-403</scope>
    <scope>CLEAVAGE OF INITIATOR METHIONINE [LARGE SCALE ANALYSIS]</scope>
    <scope>IDENTIFICATION BY MASS SPECTROMETRY [LARGE SCALE ANALYSIS]</scope>
    <source>
        <tissue>Cervix carcinoma</tissue>
    </source>
</reference>
<reference key="12">
    <citation type="journal article" date="2011" name="BMC Syst. Biol.">
        <title>Initial characterization of the human central proteome.</title>
        <authorList>
            <person name="Burkard T.R."/>
            <person name="Planyavsky M."/>
            <person name="Kaupe I."/>
            <person name="Breitwieser F.P."/>
            <person name="Buerckstuemmer T."/>
            <person name="Bennett K.L."/>
            <person name="Superti-Furga G."/>
            <person name="Colinge J."/>
        </authorList>
    </citation>
    <scope>IDENTIFICATION BY MASS SPECTROMETRY [LARGE SCALE ANALYSIS]</scope>
</reference>
<reference key="13">
    <citation type="journal article" date="2011" name="Sci. Signal.">
        <title>System-wide temporal characterization of the proteome and phosphoproteome of human embryonic stem cell differentiation.</title>
        <authorList>
            <person name="Rigbolt K.T."/>
            <person name="Prokhorova T.A."/>
            <person name="Akimov V."/>
            <person name="Henningsen J."/>
            <person name="Johansen P.T."/>
            <person name="Kratchmarova I."/>
            <person name="Kassem M."/>
            <person name="Mann M."/>
            <person name="Olsen J.V."/>
            <person name="Blagoev B."/>
        </authorList>
    </citation>
    <scope>PHOSPHORYLATION [LARGE SCALE ANALYSIS] AT SER-50; SER-262; THR-271; SER-403; SER-561 AND SER-565</scope>
    <scope>IDENTIFICATION BY MASS SPECTROMETRY [LARGE SCALE ANALYSIS]</scope>
</reference>
<reference key="14">
    <citation type="journal article" date="2013" name="J. Proteome Res.">
        <title>Toward a comprehensive characterization of a human cancer cell phosphoproteome.</title>
        <authorList>
            <person name="Zhou H."/>
            <person name="Di Palma S."/>
            <person name="Preisinger C."/>
            <person name="Peng M."/>
            <person name="Polat A.N."/>
            <person name="Heck A.J."/>
            <person name="Mohammed S."/>
        </authorList>
    </citation>
    <scope>PHOSPHORYLATION [LARGE SCALE ANALYSIS] AT SER-50; SER-66; SER-71; SER-81; SER-96; SER-126; THR-158; THR-219; SER-262; SER-344; SER-403 AND SER-561</scope>
    <scope>IDENTIFICATION BY MASS SPECTROMETRY [LARGE SCALE ANALYSIS]</scope>
    <source>
        <tissue>Cervix carcinoma</tissue>
        <tissue>Erythroleukemia</tissue>
    </source>
</reference>
<reference key="15">
    <citation type="journal article" date="2014" name="J. Proteomics">
        <title>An enzyme assisted RP-RPLC approach for in-depth analysis of human liver phosphoproteome.</title>
        <authorList>
            <person name="Bian Y."/>
            <person name="Song C."/>
            <person name="Cheng K."/>
            <person name="Dong M."/>
            <person name="Wang F."/>
            <person name="Huang J."/>
            <person name="Sun D."/>
            <person name="Wang L."/>
            <person name="Ye M."/>
            <person name="Zou H."/>
        </authorList>
    </citation>
    <scope>PHOSPHORYLATION [LARGE SCALE ANALYSIS] AT SER-27; SER-96; THR-349; SER-403 AND SER-561</scope>
    <scope>IDENTIFICATION BY MASS SPECTROMETRY [LARGE SCALE ANALYSIS]</scope>
    <source>
        <tissue>Liver</tissue>
    </source>
</reference>
<reference key="16">
    <citation type="journal article" date="2019" name="Dev. Cell">
        <title>Akt Regulates a Rab11-Effector Switch Required for Ciliogenesis.</title>
        <authorList>
            <person name="Walia V."/>
            <person name="Cuenca A."/>
            <person name="Vetter M."/>
            <person name="Insinna C."/>
            <person name="Perera S."/>
            <person name="Lu Q."/>
            <person name="Ritt D.A."/>
            <person name="Semler E."/>
            <person name="Specht S."/>
            <person name="Stauffer J."/>
            <person name="Morrison D.K."/>
            <person name="Lorentzen E."/>
            <person name="Westlake C.J."/>
        </authorList>
    </citation>
    <scope>FUNCTION</scope>
    <scope>INTERACTION WITH RAB11A AND RAB11B</scope>
    <scope>PHOSPHORYLATION AT SER-342 AND SER-344</scope>
    <scope>MUTAGENESIS OF SER-342 AND SER-344</scope>
</reference>
<reference key="17">
    <citation type="journal article" date="2020" name="J. Cell Biol.">
        <title>GRAF2, WDR44, and MICAL1 mediate Rab8/10/11-dependent export of E-cadherin, MMP14, and CFTR DeltaF508.</title>
        <authorList>
            <person name="Lucken-Ardjomande Haesler S."/>
            <person name="Vallis Y."/>
            <person name="Pasche M."/>
            <person name="McMahon H.T."/>
        </authorList>
    </citation>
    <scope>FUNCTION</scope>
    <scope>INTERACTION WITH ARHGAP26; ARHGAP10 AND RAB11A</scope>
    <scope>MUTAGENESIS OF 1-MET--GLU-15 AND 211-PRO--PRO-257</scope>
    <scope>SUBCELLULAR LOCATION</scope>
    <scope>DOMAIN</scope>
</reference>
<comment type="function">
    <text evidence="8 9">Downstream effector for Rab11 which regulates Rab11 intracellular membrane trafficking functions such as endocytic recycling, intracellular ciliogenesis and protein export (PubMed:31204173, PubMed:32344433). ATK1-mediated phosphorylation of WDR44 induces binding to Rab11 which activates endocytic recycling of transferrin receptor back to the plasma membrane (PubMed:31204173). When bound to Rab11, prevents the formation of the ciliogenic Rab11-Rabin8/RAB3IP-RAB11FIP3 complex, therefore inhibiting preciliary trafficking and ciliogenesis (PubMed:31204173). Participates in neo-synthesized protein export by connecting the endoplasmic reticulum (ER) with the endosomal tubule via direct interactions with the integral ER proteins VAPA or VAPB and the endosomal protein GRAFs (GRAF1/ARHGAP26 or GRAF2/ARHGAP10), which facilitates the transfer of proteins such as E-cadherin, MPP14 and CFTR into a Rab8-Rab10-Rab11-dependent export route (PubMed:32344433).</text>
</comment>
<comment type="subunit">
    <text evidence="8 9">Interacts with the GTP-bound form of RAB11A and RAB11B (PubMed:31204173, PubMed:32344433). Interacts with GRAF1/ARHGAP26 or GRAF2/ARHGAP10; the interaction connects the endoplasmic reticulum (ER) with the endosomal tubule (PubMed:32344433). Interacts (via FFAT-like motif) with VAPA (via MSP domain) or VAPB (via MSP domain); the interaction connects the ER with the endosomal tubule (PubMed:32344433). Does not bind to RAB7, RAB10, RAB14, RAB35 and RAB8A (PubMed:31204173, PubMed:32344433).</text>
</comment>
<comment type="interaction">
    <interactant intactId="EBI-3441235">
        <id>Q5JSH3</id>
    </interactant>
    <interactant intactId="EBI-716404">
        <id>P16284</id>
        <label>PECAM1</label>
    </interactant>
    <organismsDiffer>false</organismsDiffer>
    <experiments>3</experiments>
</comment>
<comment type="subcellular location">
    <subcellularLocation>
        <location evidence="2">Cytoplasm</location>
        <location evidence="2">Cytosol</location>
    </subcellularLocation>
    <subcellularLocation>
        <location evidence="2">Cytoplasm</location>
        <location evidence="2">Perinuclear region</location>
    </subcellularLocation>
    <subcellularLocation>
        <location evidence="9">Endosome membrane</location>
    </subcellularLocation>
    <subcellularLocation>
        <location evidence="2">Golgi apparatus</location>
        <location evidence="2">trans-Golgi network</location>
    </subcellularLocation>
    <text evidence="2 9">Colocalized with RAB11A, RAB8A, RAB10 and MICAL1 on endosomal tubules (PubMed:32344433). Colocalized with RAB11A along microtubules oriented toward lamellipodia.</text>
</comment>
<comment type="alternative products">
    <event type="alternative splicing"/>
    <isoform>
        <id>Q5JSH3-1</id>
        <name>1</name>
        <sequence type="displayed"/>
    </isoform>
    <isoform>
        <id>Q5JSH3-2</id>
        <name>2</name>
        <sequence type="described" ref="VSP_021809"/>
    </isoform>
    <isoform>
        <id>Q5JSH3-3</id>
        <name>3</name>
        <sequence type="described" ref="VSP_021807 VSP_021808 VSP_021810"/>
    </isoform>
    <isoform>
        <id>Q5JSH3-4</id>
        <name>4</name>
        <sequence type="described" ref="VSP_046637 VSP_046638"/>
    </isoform>
</comment>
<comment type="domain">
    <text evidence="9">The FFAT-like motif is important for interaction with VAPA or VAPB.</text>
</comment>
<comment type="PTM">
    <text evidence="8">Phosphorylated by ATK1; the phosphorylation stabilizes its interaction with RAB11A and RAB11B.</text>
</comment>
<comment type="sequence caution" evidence="12">
    <conflict type="frameshift">
        <sequence resource="EMBL-CDS" id="BAA92015"/>
    </conflict>
</comment>
<comment type="sequence caution" evidence="12">
    <conflict type="erroneous initiation">
        <sequence resource="EMBL-CDS" id="BAC03799"/>
    </conflict>
</comment>
<protein>
    <recommendedName>
        <fullName>WD repeat-containing protein 44</fullName>
    </recommendedName>
    <alternativeName>
        <fullName evidence="3">Rab11-binding protein</fullName>
        <shortName evidence="3">Rab11BP</shortName>
    </alternativeName>
    <alternativeName>
        <fullName evidence="2">Rabphilin-11</fullName>
    </alternativeName>
</protein>
<gene>
    <name evidence="13" type="primary">WDR44</name>
    <name type="synonym">RPH11</name>
</gene>
<feature type="initiator methionine" description="Removed" evidence="17 19">
    <location>
        <position position="1"/>
    </location>
</feature>
<feature type="chain" id="PRO_0000262769" description="WD repeat-containing protein 44">
    <location>
        <begin position="2"/>
        <end position="913"/>
    </location>
</feature>
<feature type="repeat" description="WD 1">
    <location>
        <begin position="509"/>
        <end position="548"/>
    </location>
</feature>
<feature type="repeat" description="WD 2">
    <location>
        <begin position="605"/>
        <end position="643"/>
    </location>
</feature>
<feature type="repeat" description="WD 3">
    <location>
        <begin position="645"/>
        <end position="685"/>
    </location>
</feature>
<feature type="repeat" description="WD 4">
    <location>
        <begin position="690"/>
        <end position="729"/>
    </location>
</feature>
<feature type="repeat" description="WD 5">
    <location>
        <begin position="740"/>
        <end position="779"/>
    </location>
</feature>
<feature type="repeat" description="WD 6">
    <location>
        <begin position="784"/>
        <end position="823"/>
    </location>
</feature>
<feature type="repeat" description="WD 7">
    <location>
        <begin position="876"/>
        <end position="913"/>
    </location>
</feature>
<feature type="region of interest" description="Disordered" evidence="5">
    <location>
        <begin position="1"/>
        <end position="24"/>
    </location>
</feature>
<feature type="region of interest" description="Binding activity">
    <location>
        <begin position="2"/>
        <end position="170"/>
    </location>
</feature>
<feature type="region of interest" description="Disordered" evidence="5">
    <location>
        <begin position="205"/>
        <end position="348"/>
    </location>
</feature>
<feature type="region of interest" description="Important for interaction with ARHGAP26 AND ARHGAP10" evidence="9">
    <location>
        <begin position="211"/>
        <end position="257"/>
    </location>
</feature>
<feature type="region of interest" description="Important for interaction with RAB11A" evidence="8">
    <location>
        <begin position="334"/>
        <end position="347"/>
    </location>
</feature>
<feature type="region of interest" description="Disordered" evidence="5">
    <location>
        <begin position="397"/>
        <end position="424"/>
    </location>
</feature>
<feature type="region of interest" description="Disordered" evidence="5">
    <location>
        <begin position="459"/>
        <end position="480"/>
    </location>
</feature>
<feature type="region of interest" description="Disordered" evidence="5">
    <location>
        <begin position="557"/>
        <end position="593"/>
    </location>
</feature>
<feature type="coiled-coil region" evidence="4">
    <location>
        <begin position="119"/>
        <end position="184"/>
    </location>
</feature>
<feature type="short sequence motif" description="FFAT-like motif" evidence="9">
    <location>
        <begin position="9"/>
        <end position="15"/>
    </location>
</feature>
<feature type="compositionally biased region" description="Acidic residues" evidence="5">
    <location>
        <begin position="1"/>
        <end position="14"/>
    </location>
</feature>
<feature type="compositionally biased region" description="Pro residues" evidence="5">
    <location>
        <begin position="233"/>
        <end position="256"/>
    </location>
</feature>
<feature type="compositionally biased region" description="Basic and acidic residues" evidence="5">
    <location>
        <begin position="262"/>
        <end position="278"/>
    </location>
</feature>
<feature type="compositionally biased region" description="Polar residues" evidence="5">
    <location>
        <begin position="280"/>
        <end position="311"/>
    </location>
</feature>
<feature type="compositionally biased region" description="Acidic residues" evidence="5">
    <location>
        <begin position="467"/>
        <end position="476"/>
    </location>
</feature>
<feature type="compositionally biased region" description="Low complexity" evidence="5">
    <location>
        <begin position="561"/>
        <end position="573"/>
    </location>
</feature>
<feature type="modified residue" description="N-acetylalanine" evidence="17 19">
    <location>
        <position position="2"/>
    </location>
</feature>
<feature type="modified residue" description="Phosphoserine" evidence="19">
    <location>
        <position position="3"/>
    </location>
</feature>
<feature type="modified residue" description="Phosphotyrosine" evidence="15">
    <location>
        <position position="11"/>
    </location>
</feature>
<feature type="modified residue" description="Phosphoserine" evidence="15 19 22">
    <location>
        <position position="27"/>
    </location>
</feature>
<feature type="modified residue" description="Phosphoserine" evidence="14 19 20 21">
    <location>
        <position position="50"/>
    </location>
</feature>
<feature type="modified residue" description="Phosphoserine" evidence="21">
    <location>
        <position position="66"/>
    </location>
</feature>
<feature type="modified residue" description="Phosphoserine" evidence="21">
    <location>
        <position position="71"/>
    </location>
</feature>
<feature type="modified residue" description="Phosphoserine" evidence="21">
    <location>
        <position position="81"/>
    </location>
</feature>
<feature type="modified residue" description="Phosphoserine" evidence="14 16 18 19 21 22">
    <location>
        <position position="96"/>
    </location>
</feature>
<feature type="modified residue" description="Phosphoserine" evidence="21">
    <location>
        <position position="126"/>
    </location>
</feature>
<feature type="modified residue" description="Phosphothreonine" evidence="21">
    <location>
        <position position="158"/>
    </location>
</feature>
<feature type="modified residue" description="Phosphothreonine" evidence="16 19 21">
    <location>
        <position position="219"/>
    </location>
</feature>
<feature type="modified residue" description="Phosphoserine" evidence="15 16 19 20 21">
    <location>
        <position position="262"/>
    </location>
</feature>
<feature type="modified residue" description="Phosphothreonine" evidence="20">
    <location>
        <position position="271"/>
    </location>
</feature>
<feature type="modified residue" description="Phosphoserine; by PKB/AKT1" evidence="8 19">
    <location>
        <position position="342"/>
    </location>
</feature>
<feature type="modified residue" description="Phosphoserine; by PKB/AKT1" evidence="8 21">
    <location>
        <position position="344"/>
    </location>
</feature>
<feature type="modified residue" description="Phosphothreonine" evidence="22">
    <location>
        <position position="349"/>
    </location>
</feature>
<feature type="modified residue" description="Phosphoserine" evidence="15 16 18 19 20 21 22">
    <location>
        <position position="403"/>
    </location>
</feature>
<feature type="modified residue" description="Phosphoserine" evidence="16">
    <location>
        <position position="470"/>
    </location>
</feature>
<feature type="modified residue" description="Phosphoserine" evidence="16">
    <location>
        <position position="471"/>
    </location>
</feature>
<feature type="modified residue" description="Phosphoserine" evidence="16">
    <location>
        <position position="472"/>
    </location>
</feature>
<feature type="modified residue" description="Phosphotyrosine" evidence="1">
    <location>
        <position position="479"/>
    </location>
</feature>
<feature type="modified residue" description="Phosphoserine" evidence="20 21 22">
    <location>
        <position position="561"/>
    </location>
</feature>
<feature type="modified residue" description="Phosphoserine" evidence="20">
    <location>
        <position position="565"/>
    </location>
</feature>
<feature type="splice variant" id="VSP_021807" description="In isoform 3." evidence="10">
    <location>
        <begin position="1"/>
        <end position="473"/>
    </location>
</feature>
<feature type="splice variant" id="VSP_046637" description="In isoform 4." evidence="10">
    <location>
        <begin position="37"/>
        <end position="61"/>
    </location>
</feature>
<feature type="splice variant" id="VSP_021808" description="In isoform 3." evidence="10">
    <original>DEGM</original>
    <variation>MVNV</variation>
    <location>
        <begin position="474"/>
        <end position="477"/>
    </location>
</feature>
<feature type="splice variant" id="VSP_046638" description="In isoform 4." evidence="10">
    <location>
        <begin position="659"/>
        <end position="722"/>
    </location>
</feature>
<feature type="splice variant" id="VSP_021809" description="In isoform 2." evidence="11">
    <location>
        <begin position="796"/>
        <end position="803"/>
    </location>
</feature>
<feature type="splice variant" id="VSP_021810" description="In isoform 3." evidence="10">
    <original>IMKTDNTEVLLSADFTGAIKVFVNKRKNVS</original>
    <variation>AVAHACNPSTLGGRGRRIT</variation>
    <location>
        <begin position="884"/>
        <end position="913"/>
    </location>
</feature>
<feature type="sequence variant" id="VAR_029538" description="In dbSNP:rs17271416." evidence="7">
    <original>A</original>
    <variation>T</variation>
    <location>
        <position position="289"/>
    </location>
</feature>
<feature type="sequence variant" id="VAR_029539" description="In dbSNP:rs17855531." evidence="6">
    <original>T</original>
    <variation>A</variation>
    <location>
        <position position="296"/>
    </location>
</feature>
<feature type="mutagenesis site" description="Abolishes interaction with VAPA or VAPB." evidence="9">
    <location>
        <begin position="1"/>
        <end position="15"/>
    </location>
</feature>
<feature type="mutagenesis site" description="Abolishes interaction with ARHGAP26 AND ARHGAP10." evidence="9">
    <location>
        <begin position="211"/>
        <end position="257"/>
    </location>
</feature>
<feature type="mutagenesis site" description="Phosphoinactive mutant. Impaired interaction with RAB11A; when associated with A-344. Induced ciliogenesis in serum-starved conditions; when associated with A-344." evidence="8">
    <original>S</original>
    <variation>A</variation>
    <location>
        <position position="342"/>
    </location>
</feature>
<feature type="mutagenesis site" description="Phosphomimetic mutant. No ciliogenesis induction in serum-starved conditions; when associated with D-344." evidence="8">
    <original>S</original>
    <variation>D</variation>
    <location>
        <position position="342"/>
    </location>
</feature>
<feature type="mutagenesis site" description="Phosphoinactive mutant. Impaired interaction with RAB11A; when associated with A-342. Increased ciliogenesis in serum-starved conditions; when associated with A-342." evidence="8">
    <original>S</original>
    <variation>A</variation>
    <location>
        <position position="344"/>
    </location>
</feature>
<feature type="mutagenesis site" description="Phosphomimetic mutant. No ciliogenesis induction in serum-starved conditions; when associated with D-342." evidence="8">
    <original>S</original>
    <variation>D</variation>
    <location>
        <position position="344"/>
    </location>
</feature>
<feature type="sequence conflict" description="In Ref. 2; CAD97788." evidence="12" ref="2">
    <original>L</original>
    <variation>P</variation>
    <location>
        <position position="89"/>
    </location>
</feature>
<feature type="sequence conflict" description="In Ref. 2; CAL38210." evidence="12" ref="2">
    <original>S</original>
    <variation>G</variation>
    <location>
        <position position="96"/>
    </location>
</feature>
<feature type="sequence conflict" description="In Ref. 4; AAH28697." evidence="12" ref="4">
    <original>S</original>
    <variation>P</variation>
    <location>
        <position position="194"/>
    </location>
</feature>
<feature type="sequence conflict" description="In Ref. 2; CAL38662." evidence="12" ref="2">
    <original>V</original>
    <variation>A</variation>
    <location>
        <position position="206"/>
    </location>
</feature>
<feature type="sequence conflict" description="In Ref. 2; CAL38662." evidence="12" ref="2">
    <original>P</original>
    <variation>L</variation>
    <location>
        <position position="250"/>
    </location>
</feature>
<feature type="sequence conflict" description="In Ref. 1; BAG61611." evidence="12" ref="1">
    <original>V</original>
    <variation>A</variation>
    <location>
        <position position="276"/>
    </location>
</feature>
<feature type="sequence conflict" description="In Ref. 2; CAD98010." evidence="12" ref="2">
    <original>A</original>
    <variation>P</variation>
    <location>
        <position position="331"/>
    </location>
</feature>
<feature type="sequence conflict" description="In Ref. 2; CAL38210." evidence="12" ref="2">
    <original>G</original>
    <variation>D</variation>
    <location>
        <position position="380"/>
    </location>
</feature>
<feature type="sequence conflict" description="In Ref. 2; CAL38662." evidence="12" ref="2">
    <original>D</original>
    <variation>N</variation>
    <location>
        <position position="473"/>
    </location>
</feature>
<feature type="sequence conflict" description="In Ref. 2; CAD97788." evidence="12" ref="2">
    <original>V</original>
    <variation>A</variation>
    <location>
        <position position="534"/>
    </location>
</feature>
<feature type="sequence conflict" description="In Ref. 2; CAD97788." evidence="12" ref="2">
    <original>A</original>
    <variation>L</variation>
    <location>
        <position position="539"/>
    </location>
</feature>
<feature type="sequence conflict" description="In Ref. 1; BAG61611." evidence="12" ref="1">
    <original>F</original>
    <variation>L</variation>
    <location>
        <position position="547"/>
    </location>
</feature>
<feature type="sequence conflict" description="In Ref. 2; CAD97788." evidence="12" ref="2">
    <original>E</original>
    <variation>G</variation>
    <location>
        <position position="586"/>
    </location>
</feature>
<feature type="sequence conflict" description="In Ref. 2; CAL38662." evidence="12" ref="2">
    <original>L</original>
    <variation>P</variation>
    <location>
        <position position="613"/>
    </location>
</feature>
<feature type="sequence conflict" description="In Ref. 1; BAA92015." evidence="12" ref="1">
    <location>
        <begin position="649"/>
        <end position="650"/>
    </location>
</feature>
<feature type="sequence conflict" description="In Ref. 2; CAL38210/CAL38662." evidence="12" ref="2">
    <original>K</original>
    <variation>R</variation>
    <location>
        <position position="740"/>
    </location>
</feature>
<feature type="sequence conflict" description="In Ref. 2; CAL38662." evidence="12" ref="2">
    <original>L</original>
    <variation>S</variation>
    <location>
        <position position="858"/>
    </location>
</feature>